<name>NS8_SARS2</name>
<organism>
    <name type="scientific">Severe acute respiratory syndrome coronavirus 2</name>
    <name type="common">2019-nCoV</name>
    <name type="synonym">SARS-CoV-2</name>
    <dbReference type="NCBI Taxonomy" id="2697049"/>
    <lineage>
        <taxon>Viruses</taxon>
        <taxon>Riboviria</taxon>
        <taxon>Orthornavirae</taxon>
        <taxon>Pisuviricota</taxon>
        <taxon>Pisoniviricetes</taxon>
        <taxon>Nidovirales</taxon>
        <taxon>Cornidovirineae</taxon>
        <taxon>Coronaviridae</taxon>
        <taxon>Orthocoronavirinae</taxon>
        <taxon>Betacoronavirus</taxon>
        <taxon>Sarbecovirus</taxon>
        <taxon>Severe acute respiratory syndrome coronavirus</taxon>
    </lineage>
</organism>
<organismHost>
    <name type="scientific">Homo sapiens</name>
    <name type="common">Human</name>
    <dbReference type="NCBI Taxonomy" id="9606"/>
</organismHost>
<comment type="function">
    <text evidence="6 7 8 9 10 11 13">Plays a role in modulating the host immune response (PubMed:31986261, PubMed:35343786, PubMed:36689483). May act as a secreted virokine by mimicking interleukin-17A (IL17A), and thereby binding to the IL17RA receptor, leading to activation of the IL17 pathway and increased secretion of pro-inflammatory factors (PubMed:35343786, PubMed:36689483). Contributes to the cytokine storm during SARS-CoV-2 infection when secreted by unconventional pathway (PubMed:33723527, PubMed:36689483). May act by down-regulating major histocompability complex class I (MHC-I) at cell surface (PubMed:34021074, PubMed:35157849). May inhibit expression of some members of the IFN-stimulated gene (ISG) family including hosts IGF2BP1/ZBP1, MX1 and MX2, and DHX58 (PubMed:34177923).</text>
</comment>
<comment type="subunit">
    <text evidence="4 5 6 9 10">Homodimer (PubMed:33361333, PubMed:35157849). Interacts with host IL17RA (PubMed:33060197, PubMed:35343786). Interacts with host IL17RC (PubMed:35343786). Interacts with host MHC-I (PubMed:34021074).</text>
</comment>
<comment type="interaction">
    <interactant intactId="EBI-25475900">
        <id>P0DTC8</id>
    </interactant>
    <interactant intactId="EBI-25475900">
        <id>P0DTC8</id>
        <label>8</label>
    </interactant>
    <organismsDiffer>false</organismsDiffer>
    <experiments>3</experiments>
</comment>
<comment type="interaction">
    <interactant intactId="EBI-25475900">
        <id>P0DTC8</id>
    </interactant>
    <interactant intactId="EBI-2511802">
        <id>Q9UHI8</id>
        <label>ADAMTS1</label>
    </interactant>
    <organismsDiffer>true</organismsDiffer>
    <experiments>3</experiments>
</comment>
<comment type="interaction">
    <interactant intactId="EBI-25475900">
        <id>P0DTC8</id>
    </interactant>
    <interactant intactId="EBI-1044442">
        <id>Q8N766</id>
        <label>EMC1</label>
    </interactant>
    <organismsDiffer>true</organismsDiffer>
    <experiments>3</experiments>
</comment>
<comment type="interaction">
    <interactant intactId="EBI-25475900">
        <id>P0DTC8</id>
    </interactant>
    <interactant intactId="EBI-2839473">
        <id>P01892</id>
        <label>HLA-A</label>
    </interactant>
    <organismsDiffer>true</organismsDiffer>
    <experiments>5</experiments>
</comment>
<comment type="interaction">
    <interactant intactId="EBI-25475900">
        <id>P0DTC8</id>
    </interactant>
    <interactant intactId="EBI-5591258">
        <id>Q96F46</id>
        <label>IL17RA</label>
    </interactant>
    <organismsDiffer>true</organismsDiffer>
    <experiments>3</experiments>
</comment>
<comment type="interaction">
    <interactant intactId="EBI-28965865">
        <id>PRO_0000449655</id>
    </interactant>
    <interactant intactId="EBI-28965865">
        <id>PRO_0000449655</id>
        <label>8</label>
        <dbReference type="UniProtKB" id="P0DTC8"/>
    </interactant>
    <organismsDiffer>false</organismsDiffer>
    <experiments>2</experiments>
</comment>
<comment type="subcellular location">
    <subcellularLocation>
        <location evidence="9 10">Secreted</location>
    </subcellularLocation>
    <text evidence="4 8 9">Is secreted during a normal viral infection by unconventional pathway (PubMed:35157849, PubMed:36689483). Its mRNA is expressed in cytoplasm and not spliced during a viral infection, but is spliced when expressed from cDNA in nucleus (PubMed:35157849). Splicing changes localization to host endosome and/or cytoplasm (PubMed:33060197, PubMed:34177923). May also localize in nucleus when fused with GFP (PubMed:34177923).</text>
</comment>
<comment type="PTM">
    <text evidence="11">Glycosylated by the host when secreted via the conventional pathway. The glycosylated form cannot bind IL17A and would not participate in the cytokine storm.</text>
</comment>
<comment type="polymorphism">
    <text evidence="17">Variant B.1.1.7 is also called Variant Of Concern (VOC) 202012/01, Variant Under Investigation (VUI) 202012/01, or 20B/501Y.V1.</text>
</comment>
<comment type="polymorphism">
    <text evidence="14">Variant Omicron/BA.1 and BA.2 belong to a lineage first isolated in South Africa (November 2021).</text>
</comment>
<comment type="polymorphism">
    <text evidence="14">Variant Omicron/BQ.1.1 belongs to a lineage first isolated in Nigeria (November 2022).</text>
</comment>
<comment type="polymorphism">
    <text evidence="14">Variant Omicron/XBB.1.5 belongs to a lineage first isolated in United States (November 2022). It is the result of recombination between omicron BJ.1 and BM.1.1. Moreover XBB.1.5 do not express ORF8.</text>
</comment>
<comment type="miscellaneous">
    <text evidence="3 16">Similar to some Bat coronavirus ns8 genes, but is entirely different from SARS ns8a or Ns8b (Probable). Elicits strong specific antibody response (PubMed:32807944).</text>
</comment>
<keyword id="KW-0002">3D-structure</keyword>
<keyword id="KW-1015">Disulfide bond</keyword>
<keyword id="KW-1125">Evasion of host immunity by viral interleukin-like protein</keyword>
<keyword id="KW-0325">Glycoprotein</keyword>
<keyword id="KW-0945">Host-virus interaction</keyword>
<keyword id="KW-1185">Reference proteome</keyword>
<keyword id="KW-0964">Secreted</keyword>
<keyword id="KW-0732">Signal</keyword>
<keyword id="KW-0899">Viral immunoevasion</keyword>
<feature type="signal peptide" evidence="1">
    <location>
        <begin position="1"/>
        <end position="15"/>
    </location>
</feature>
<feature type="chain" id="PRO_0000449655" description="ORF8 protein">
    <location>
        <begin position="16"/>
        <end position="121"/>
    </location>
</feature>
<feature type="domain" description="SARS ORF8 Ig-like" evidence="2">
    <location>
        <begin position="19"/>
        <end position="121"/>
    </location>
</feature>
<feature type="glycosylation site" description="N-linked (GlcNAc...) (complex) asparagine; by host" evidence="9 11">
    <location>
        <position position="78"/>
    </location>
</feature>
<feature type="disulfide bond" description="Interchain" evidence="2 5 9">
    <location>
        <position position="20"/>
    </location>
</feature>
<feature type="disulfide bond" evidence="2 5 12">
    <location>
        <begin position="25"/>
        <end position="90"/>
    </location>
</feature>
<feature type="disulfide bond" evidence="2 5 12">
    <location>
        <begin position="37"/>
        <end position="102"/>
    </location>
</feature>
<feature type="disulfide bond" evidence="2 5 12">
    <location>
        <begin position="61"/>
        <end position="83"/>
    </location>
</feature>
<feature type="sequence variant" description="In strain: Theta/P.3." evidence="14">
    <original>K</original>
    <variation>Q</variation>
    <location>
        <position position="2"/>
    </location>
</feature>
<feature type="sequence variant" description="In strain: Omicron/XBB.1.5, Omicron/EG.5.1." evidence="14">
    <location>
        <begin position="8"/>
        <end position="121"/>
    </location>
</feature>
<feature type="sequence variant" description="In strain: Iota/B.1.526." evidence="14">
    <original>T</original>
    <variation>I</variation>
    <location>
        <position position="11"/>
    </location>
</feature>
<feature type="sequence variant" description="In strain: Mu/B.1.621." evidence="14">
    <original>T</original>
    <variation>K</variation>
    <location>
        <position position="11"/>
    </location>
</feature>
<feature type="sequence variant" description="In strain: B.1.1.7." evidence="17">
    <location>
        <begin position="28"/>
        <end position="121"/>
    </location>
</feature>
<feature type="sequence variant" description="In strain: Mu/B.1.621." evidence="14">
    <original>P</original>
    <variation>S</variation>
    <location>
        <position position="38"/>
    </location>
</feature>
<feature type="sequence variant" evidence="14 15">
    <original>L</original>
    <variation>S</variation>
    <location>
        <position position="84"/>
    </location>
</feature>
<feature type="sequence variant" description="In strain: Gamma/P.1." evidence="14">
    <original>E</original>
    <variation>K</variation>
    <location>
        <position position="92"/>
    </location>
</feature>
<feature type="sequence variant" description="In strain: Delta/B.1.617.2." evidence="14">
    <original>D</original>
    <variation>I</variation>
    <location>
        <position position="119"/>
    </location>
</feature>
<feature type="sequence variant" description="In strain: Delta/B.1.617.2." evidence="14">
    <location>
        <begin position="120"/>
        <end position="121"/>
    </location>
</feature>
<feature type="mutagenesis site" description="Partial loss of secretion." evidence="11">
    <location>
        <begin position="1"/>
        <end position="16"/>
    </location>
</feature>
<feature type="mutagenesis site" description="Complete loss of dimerization." evidence="9">
    <original>C</original>
    <variation>A</variation>
    <location>
        <position position="20"/>
    </location>
</feature>
<feature type="mutagenesis site" description="Partial loss of hIL-17RC binding." evidence="10">
    <original>S</original>
    <variation>L</variation>
    <location>
        <position position="24"/>
    </location>
</feature>
<feature type="mutagenesis site" description="Complete loss of hIL-17RA binding." evidence="10">
    <original>Y</original>
    <variation>H</variation>
    <location>
        <position position="42"/>
    </location>
</feature>
<feature type="mutagenesis site" description="Partial loss of hIL-17RC binding." evidence="10">
    <original>V</original>
    <variation>L</variation>
    <location>
        <position position="62"/>
    </location>
</feature>
<feature type="mutagenesis site" description="Complete loss of hIL-17RC binding." evidence="10">
    <original>I</original>
    <variation>D</variation>
    <location>
        <position position="71"/>
    </location>
</feature>
<feature type="mutagenesis site" description="Complete loss of hIL-17RC binding." evidence="10">
    <original>I</original>
    <variation>D</variation>
    <location>
        <position position="76"/>
    </location>
</feature>
<feature type="mutagenesis site" description="Complete loss of N-glycosylation and of secretion." evidence="9">
    <original>N</original>
    <variation>D</variation>
    <location>
        <position position="78"/>
    </location>
</feature>
<feature type="mutagenesis site" description="Complete loss of glycosylation when secreted by conventional route. Increases cytokine storm effects." evidence="11">
    <original>N</original>
    <variation>Q</variation>
    <location>
        <position position="78"/>
    </location>
</feature>
<feature type="mutagenesis site" description="Complete loss of IL17RA binding." evidence="10">
    <original>L</original>
    <variation>S</variation>
    <location>
        <position position="84"/>
    </location>
</feature>
<feature type="mutagenesis site" description="Complete loss of hIL-17RA binding." evidence="10">
    <original>E</original>
    <variation>P</variation>
    <location>
        <position position="106"/>
    </location>
</feature>
<feature type="strand" evidence="19">
    <location>
        <begin position="19"/>
        <end position="25"/>
    </location>
</feature>
<feature type="strand" evidence="19">
    <location>
        <begin position="29"/>
        <end position="32"/>
    </location>
</feature>
<feature type="strand" evidence="19">
    <location>
        <begin position="41"/>
        <end position="49"/>
    </location>
</feature>
<feature type="strand" evidence="19">
    <location>
        <begin position="57"/>
        <end position="70"/>
    </location>
</feature>
<feature type="turn" evidence="18">
    <location>
        <begin position="74"/>
        <end position="78"/>
    </location>
</feature>
<feature type="strand" evidence="19">
    <location>
        <begin position="80"/>
        <end position="82"/>
    </location>
</feature>
<feature type="turn" evidence="19">
    <location>
        <begin position="83"/>
        <end position="86"/>
    </location>
</feature>
<feature type="strand" evidence="19">
    <location>
        <begin position="87"/>
        <end position="91"/>
    </location>
</feature>
<feature type="strand" evidence="19">
    <location>
        <begin position="96"/>
        <end position="105"/>
    </location>
</feature>
<feature type="strand" evidence="19">
    <location>
        <begin position="112"/>
        <end position="120"/>
    </location>
</feature>
<accession>P0DTC8</accession>
<proteinExistence type="evidence at protein level"/>
<dbReference type="EMBL" id="MN908947">
    <property type="protein sequence ID" value="QHD43422.1"/>
    <property type="molecule type" value="Genomic_RNA"/>
</dbReference>
<dbReference type="EMBL" id="MN938384">
    <property type="status" value="NOT_ANNOTATED_CDS"/>
    <property type="molecule type" value="Genomic_RNA"/>
</dbReference>
<dbReference type="PDB" id="7F5F">
    <property type="method" value="X-ray"/>
    <property type="resolution" value="1.62 A"/>
    <property type="chains" value="A=18-121"/>
</dbReference>
<dbReference type="PDB" id="7JTL">
    <property type="method" value="X-ray"/>
    <property type="resolution" value="2.04 A"/>
    <property type="chains" value="A/B=18-121"/>
</dbReference>
<dbReference type="PDB" id="7JX6">
    <property type="method" value="X-ray"/>
    <property type="resolution" value="1.61 A"/>
    <property type="chains" value="A/B=18-121"/>
</dbReference>
<dbReference type="PDB" id="7MX9">
    <property type="method" value="X-ray"/>
    <property type="resolution" value="2.60 A"/>
    <property type="chains" value="A=15-121"/>
</dbReference>
<dbReference type="PDB" id="7XMN">
    <property type="method" value="X-ray"/>
    <property type="resolution" value="2.30 A"/>
    <property type="chains" value="B=16-121"/>
</dbReference>
<dbReference type="PDBsum" id="7F5F"/>
<dbReference type="PDBsum" id="7JTL"/>
<dbReference type="PDBsum" id="7JX6"/>
<dbReference type="PDBsum" id="7MX9"/>
<dbReference type="PDBsum" id="7XMN"/>
<dbReference type="SMR" id="P0DTC8"/>
<dbReference type="BioGRID" id="4383873">
    <property type="interactions" value="1317"/>
</dbReference>
<dbReference type="ComplexPortal" id="CPX-6147">
    <property type="entry name" value="SARS-CoV-2 ORF8 complex"/>
</dbReference>
<dbReference type="FunCoup" id="P0DTC8">
    <property type="interactions" value="213"/>
</dbReference>
<dbReference type="IntAct" id="P0DTC8">
    <property type="interactions" value="152"/>
</dbReference>
<dbReference type="MINT" id="P0DTC8"/>
<dbReference type="GlyGen" id="P0DTC8">
    <property type="glycosylation" value="1 site"/>
</dbReference>
<dbReference type="iPTMnet" id="P0DTC8"/>
<dbReference type="AGR" id="RefSeq:YP_009724396"/>
<dbReference type="Reactome" id="R-HSA-448424">
    <property type="pathway name" value="Interleukin-17 signaling"/>
</dbReference>
<dbReference type="Reactome" id="R-HSA-9705671">
    <property type="pathway name" value="SARS-CoV-2 activates/modulates innate and adaptive immune responses"/>
</dbReference>
<dbReference type="Reactome" id="R-HSA-9727281">
    <property type="pathway name" value="Translation of Accessory Proteins"/>
</dbReference>
<dbReference type="Reactome" id="R-HSA-983170">
    <property type="pathway name" value="Antigen Presentation: Folding, assembly and peptide loading of class I MHC"/>
</dbReference>
<dbReference type="PRO" id="PR:P0DTC8"/>
<dbReference type="Proteomes" id="UP000464024">
    <property type="component" value="Genome"/>
</dbReference>
<dbReference type="Proteomes" id="UP000464747">
    <property type="component" value="Genome"/>
</dbReference>
<dbReference type="GO" id="GO:0005783">
    <property type="term" value="C:endoplasmic reticulum"/>
    <property type="evidence" value="ECO:0000314"/>
    <property type="project" value="ComplexPortal"/>
</dbReference>
<dbReference type="GO" id="GO:0005576">
    <property type="term" value="C:extracellular region"/>
    <property type="evidence" value="ECO:0000304"/>
    <property type="project" value="Reactome"/>
</dbReference>
<dbReference type="GO" id="GO:0005615">
    <property type="term" value="C:extracellular space"/>
    <property type="evidence" value="ECO:0000314"/>
    <property type="project" value="UniProt"/>
</dbReference>
<dbReference type="GO" id="GO:0005764">
    <property type="term" value="C:lysosome"/>
    <property type="evidence" value="ECO:0000314"/>
    <property type="project" value="ComplexPortal"/>
</dbReference>
<dbReference type="GO" id="GO:0005125">
    <property type="term" value="F:cytokine activity"/>
    <property type="evidence" value="ECO:0000314"/>
    <property type="project" value="UniProt"/>
</dbReference>
<dbReference type="GO" id="GO:0042802">
    <property type="term" value="F:identical protein binding"/>
    <property type="evidence" value="ECO:0000353"/>
    <property type="project" value="IntAct"/>
</dbReference>
<dbReference type="GO" id="GO:0032688">
    <property type="term" value="P:negative regulation of interferon-beta production"/>
    <property type="evidence" value="ECO:0000314"/>
    <property type="project" value="ComplexPortal"/>
</dbReference>
<dbReference type="GO" id="GO:0002891">
    <property type="term" value="P:positive regulation of immunoglobulin mediated immune response"/>
    <property type="evidence" value="ECO:0000314"/>
    <property type="project" value="ComplexPortal"/>
</dbReference>
<dbReference type="GO" id="GO:0052031">
    <property type="term" value="P:symbiont-mediated perturbation of host defense response"/>
    <property type="evidence" value="ECO:0000314"/>
    <property type="project" value="UniProt"/>
</dbReference>
<dbReference type="GO" id="GO:0141174">
    <property type="term" value="P:symbiont-mediated suppression of host anti-inflammatory cytokine signaling"/>
    <property type="evidence" value="ECO:0000269"/>
    <property type="project" value="SigSci"/>
</dbReference>
<dbReference type="GO" id="GO:0046776">
    <property type="term" value="P:symbiont-mediated suppression of host antigen processing and presentation of peptide antigen via MHC class I"/>
    <property type="evidence" value="ECO:0000314"/>
    <property type="project" value="ComplexPortal"/>
</dbReference>
<dbReference type="CDD" id="cd21641">
    <property type="entry name" value="ORF8-Ig_SARS-CoV-2-like"/>
    <property type="match status" value="1"/>
</dbReference>
<dbReference type="InterPro" id="IPR022722">
    <property type="entry name" value="ORF8_betacoronavirus"/>
</dbReference>
<dbReference type="InterPro" id="IPR044391">
    <property type="entry name" value="ORF8_SARS-CoV-2-like"/>
</dbReference>
<dbReference type="InterPro" id="IPR046444">
    <property type="entry name" value="SARS_ORF8_IG"/>
</dbReference>
<dbReference type="Pfam" id="PF12093">
    <property type="entry name" value="bCoV_NS8"/>
    <property type="match status" value="1"/>
</dbReference>
<dbReference type="PROSITE" id="PS51964">
    <property type="entry name" value="SARS_ORF8_IG"/>
    <property type="match status" value="1"/>
</dbReference>
<protein>
    <recommendedName>
        <fullName>ORF8 protein</fullName>
        <shortName>ORF8</shortName>
    </recommendedName>
    <alternativeName>
        <fullName>Non-structural protein 8</fullName>
        <shortName>ns8</shortName>
    </alternativeName>
</protein>
<sequence length="121" mass="13831">MKFLVFLGIITTVAAFHQECSLQSCTQHQPYVVDDPCPIHFYSKWYIRVGARKSAPLIELCVDEAGSKSPIQYIDIGNYTVSCLPFTINCQEPKLGSLVVRCSFYEDFLEYHDVRVVLDFI</sequence>
<reference key="1">
    <citation type="journal article" date="2020" name="Nature">
        <title>A new coronavirus associated with human respiratory disease in China.</title>
        <authorList>
            <person name="Wu F."/>
            <person name="Zhao S."/>
            <person name="Yu B."/>
            <person name="Chen Y.-M."/>
            <person name="Wang W."/>
            <person name="Song Z.-G."/>
            <person name="Hu Y."/>
            <person name="Tao Z.-W."/>
            <person name="Tian J.-H."/>
            <person name="Pei Y.-Y."/>
            <person name="Yuan M.-L."/>
            <person name="Zhang Y.-L."/>
            <person name="Dai F.-H."/>
            <person name="Liu Y."/>
            <person name="Wang Q.-M."/>
            <person name="Zheng J.-J."/>
            <person name="Xu L."/>
            <person name="Holmes E.C."/>
            <person name="Zhang Y.-Z."/>
        </authorList>
    </citation>
    <scope>NUCLEOTIDE SEQUENCE [GENOMIC RNA]</scope>
</reference>
<reference key="2">
    <citation type="journal article" date="2020" name="Lancet">
        <title>A familial cluster of pneumonia associated with the 2019 novel coronavirus indicating person-to-person transmission: a study of a family cluster.</title>
        <authorList>
            <person name="Chan J.F."/>
            <person name="Yuan S."/>
            <person name="Kok K.H."/>
            <person name="To K.K."/>
            <person name="Chu H."/>
            <person name="Yang J."/>
            <person name="Xing F."/>
            <person name="Liu J."/>
            <person name="Yip C.C."/>
            <person name="Poon R.W."/>
            <person name="Tsoi H.W."/>
            <person name="Lo S.K."/>
            <person name="Chan K.H."/>
            <person name="Poon V.K."/>
            <person name="Chan W.M."/>
            <person name="Ip J.D."/>
            <person name="Cai J.P."/>
            <person name="Cheng V.C."/>
            <person name="Chen H."/>
            <person name="Hui C.K."/>
            <person name="Yuen K.Y."/>
        </authorList>
    </citation>
    <scope>NUCLEOTIDE SEQUENCE [GENOMIC RNA]</scope>
    <source>
        <strain>isolate 2019-nCoV_HKU-SZ-002a_2020</strain>
    </source>
</reference>
<reference key="3">
    <citation type="journal article" date="2020" name="Virol. J.">
        <title>Characterization of accessory genes in coronavirus genomes.</title>
        <authorList>
            <person name="Michel C.J."/>
            <person name="Mayer C."/>
            <person name="Poch O."/>
            <person name="Thompson J.D."/>
        </authorList>
    </citation>
    <scope>MISCELLANEOUS</scope>
</reference>
<reference key="4">
    <citation type="journal article" date="2020" name="Nat. Immunol.">
        <title>ORF8 and ORF3b antibodies are accurate serological markers of early and late SARS-CoV-2 infection.</title>
        <authorList>
            <person name="Hachim A."/>
            <person name="Kavian N."/>
            <person name="Cohen C.A."/>
            <person name="Chin A.W.H."/>
            <person name="Chu D.K.W."/>
            <person name="Mok C.K.P."/>
            <person name="Tsang O.T.Y."/>
            <person name="Yeung Y.C."/>
            <person name="Perera R.A.P.M."/>
            <person name="Poon L.L.M."/>
            <person name="Peiris J.S.M."/>
            <person name="Valkenburg S.A."/>
        </authorList>
    </citation>
    <scope>MISCELLANEOUS</scope>
</reference>
<reference key="5">
    <citation type="journal article" date="2020" name="Science">
        <title>Comparative host-coronavirus protein interaction networks reveal pan-viral disease mechanisms.</title>
        <authorList>
            <consortium name="QCRG Structural Biology Consortium"/>
            <consortium name="Zoonomia Consortium"/>
            <person name="Gordon D.E."/>
            <person name="Hiatt J."/>
            <person name="Bouhaddou M."/>
            <person name="Rezelj V.V."/>
            <person name="Ulferts S."/>
            <person name="Braberg H."/>
            <person name="Jureka A.S."/>
            <person name="Obernier K."/>
            <person name="Guo J.Z."/>
            <person name="Batra J."/>
            <person name="Kaake R.M."/>
            <person name="Weckstein A.R."/>
            <person name="Owens T.W."/>
            <person name="Gupta M."/>
            <person name="Pourmal S."/>
            <person name="Titus E.W."/>
            <person name="Cakir M."/>
            <person name="Soucheray M."/>
            <person name="McGregor M."/>
            <person name="Cakir Z."/>
            <person name="Jang G."/>
            <person name="O'Meara M.J."/>
            <person name="Tummino T.A."/>
            <person name="Zhang Z."/>
            <person name="Foussard H."/>
            <person name="Rojc A."/>
            <person name="Zhou Y."/>
            <person name="Kuchenov D."/>
            <person name="Huettenhain R."/>
            <person name="Xu J."/>
            <person name="Eckhardt M."/>
            <person name="Swaney D.L."/>
            <person name="Fabius J.M."/>
            <person name="Ummadi M."/>
            <person name="Tutuncuoglu B."/>
            <person name="Rathore U."/>
            <person name="Modak M."/>
            <person name="Haas P."/>
            <person name="Haas K.M."/>
            <person name="Naing Z.Z.C."/>
            <person name="Pulido E.H."/>
            <person name="Shi Y."/>
            <person name="Barrio-Hernandez I."/>
            <person name="Memon D."/>
            <person name="Petsalaki E."/>
            <person name="Dunham A."/>
            <person name="Marrero M.C."/>
            <person name="Burke D."/>
            <person name="Koh C."/>
            <person name="Vallet T."/>
            <person name="Silvas J.A."/>
            <person name="Azumaya C.M."/>
            <person name="Billesboelle C."/>
            <person name="Brilot A.F."/>
            <person name="Campbell M.G."/>
            <person name="Diallo A."/>
            <person name="Dickinson M.S."/>
            <person name="Diwanji D."/>
            <person name="Herrera N."/>
            <person name="Hoppe N."/>
            <person name="Kratochvil H.T."/>
            <person name="Liu Y."/>
            <person name="Merz G.E."/>
            <person name="Moritz M."/>
            <person name="Nguyen H.C."/>
            <person name="Nowotny C."/>
            <person name="Puchades C."/>
            <person name="Rizo A.N."/>
            <person name="Schulze-Gahmen U."/>
            <person name="Smith A.M."/>
            <person name="Sun M."/>
            <person name="Young I.D."/>
            <person name="Zhao J."/>
            <person name="Asarnow D."/>
            <person name="Biel J."/>
            <person name="Bowen A."/>
            <person name="Braxton J.R."/>
            <person name="Chen J."/>
            <person name="Chio C.M."/>
            <person name="Chio U.S."/>
            <person name="Deshpande I."/>
            <person name="Doan L."/>
            <person name="Faust B."/>
            <person name="Flores S."/>
            <person name="Jin M."/>
            <person name="Kim K."/>
            <person name="Lam V.L."/>
            <person name="Li F."/>
            <person name="Li J."/>
            <person name="Li Y.L."/>
            <person name="Li Y."/>
            <person name="Liu X."/>
            <person name="Lo M."/>
            <person name="Lopez K.E."/>
            <person name="Melo A.A."/>
            <person name="Moss F.R. III"/>
            <person name="Nguyen P."/>
            <person name="Paulino J."/>
            <person name="Pawar K.I."/>
            <person name="Peters J.K."/>
            <person name="Pospiech T.H. Jr."/>
            <person name="Safari M."/>
            <person name="Sangwan S."/>
            <person name="Schaefer K."/>
            <person name="Thomas P.V."/>
            <person name="Thwin A.C."/>
            <person name="Trenker R."/>
            <person name="Tse E."/>
            <person name="Tsui T.K.M."/>
            <person name="Wang F."/>
            <person name="Whitis N."/>
            <person name="Yu Z."/>
            <person name="Zhang K."/>
            <person name="Zhang Y."/>
            <person name="Zhou F."/>
            <person name="Saltzberg D."/>
            <person name="Hodder A.J."/>
            <person name="Shun-Shion A.S."/>
            <person name="Williams D.M."/>
            <person name="White K.M."/>
            <person name="Rosales R."/>
            <person name="Kehrer T."/>
            <person name="Miorin L."/>
            <person name="Moreno E."/>
            <person name="Patel A.H."/>
            <person name="Rihn S."/>
            <person name="Khalid M.M."/>
            <person name="Vallejo-Gracia A."/>
            <person name="Fozouni P."/>
            <person name="Simoneau C.R."/>
            <person name="Roth T.L."/>
            <person name="Wu D."/>
            <person name="Karim M.A."/>
            <person name="Ghoussaini M."/>
            <person name="Dunham I."/>
            <person name="Berardi F."/>
            <person name="Weigang S."/>
            <person name="Chazal M."/>
            <person name="Park J."/>
            <person name="Logue J."/>
            <person name="McGrath M."/>
            <person name="Weston S."/>
            <person name="Haupt R."/>
            <person name="Hastie C.J."/>
            <person name="Elliott M."/>
            <person name="Brown F."/>
            <person name="Burness K.A."/>
            <person name="Reid E."/>
            <person name="Dorward M."/>
            <person name="Johnson C."/>
            <person name="Wilkinson S.G."/>
            <person name="Geyer A."/>
            <person name="Giesel D.M."/>
            <person name="Baillie C."/>
            <person name="Raggett S."/>
            <person name="Leech H."/>
            <person name="Toth R."/>
            <person name="Goodman N."/>
            <person name="Keough K.C."/>
            <person name="Lind A.L."/>
            <person name="Klesh R.J."/>
            <person name="Hemphill K.R."/>
            <person name="Carlson-Stevermer J."/>
            <person name="Oki J."/>
            <person name="Holden K."/>
            <person name="Maures T."/>
            <person name="Pollard K.S."/>
            <person name="Sali A."/>
            <person name="Agard D.A."/>
            <person name="Cheng Y."/>
            <person name="Fraser J.S."/>
            <person name="Frost A."/>
            <person name="Jura N."/>
            <person name="Kortemme T."/>
            <person name="Manglik A."/>
            <person name="Southworth D.R."/>
            <person name="Stroud R.M."/>
            <person name="Alessi D.R."/>
            <person name="Davies P."/>
            <person name="Frieman M.B."/>
            <person name="Ideker T."/>
            <person name="Abate C."/>
            <person name="Jouvenet N."/>
            <person name="Kochs G."/>
            <person name="Shoichet B."/>
            <person name="Ott M."/>
            <person name="Palmarini M."/>
            <person name="Shokat K.M."/>
            <person name="Garcia-Sastre A."/>
            <person name="Rassen J.A."/>
            <person name="Grosse R."/>
            <person name="Rosenberg O.S."/>
            <person name="Verba K.A."/>
            <person name="Basler C.F."/>
            <person name="Vignuzzi M."/>
            <person name="Peden A.A."/>
            <person name="Beltrao P."/>
            <person name="Krogan N.J."/>
        </authorList>
    </citation>
    <scope>INTERACTION WITH HUMAN IL17RA</scope>
    <scope>SUBCELLULAR LOCATION</scope>
</reference>
<reference key="6">
    <citation type="journal article" date="2021" name="IScience">
        <title>Title: ORF8 contributes to cytokine storm during SARS-CoV-2 infection by activating IL-17 pathway.</title>
        <authorList>
            <person name="Lin X."/>
            <person name="Fu B."/>
            <person name="Yin S."/>
            <person name="Li Z."/>
            <person name="Liu H."/>
            <person name="Zhang H."/>
            <person name="Xing N."/>
            <person name="Wang Y."/>
            <person name="Xue W."/>
            <person name="Xiong Y."/>
            <person name="Zhang S."/>
            <person name="Zhao Q."/>
            <person name="Xu S."/>
            <person name="Zhang J."/>
            <person name="Wang P."/>
            <person name="Nian W."/>
            <person name="Wang X."/>
            <person name="Wu H."/>
        </authorList>
    </citation>
    <scope>INTERACTION WITH HUMAN IL17RA</scope>
    <scope>FUNCTION</scope>
</reference>
<reference key="7">
    <citation type="journal article" date="2020" name="Infect. Genet. Evol.">
        <title>Characterizations of SARS-CoV-2 mutational profile, spike protein stability and viral transmission.</title>
        <authorList>
            <person name="Laha S."/>
            <person name="Chakraborty J."/>
            <person name="Das S."/>
            <person name="Manna S.K."/>
            <person name="Biswas S."/>
            <person name="Chatterjee R."/>
        </authorList>
    </citation>
    <scope>VARIANT SER-84</scope>
</reference>
<reference key="8">
    <citation type="journal article" date="2021" name="Eurosurveillance">
        <title>Early transmissibility assessment of the N501Y mutant strains of SARS-CoV-2 in the United Kingdom, October to November 2020.</title>
        <authorList>
            <person name="Leung K."/>
            <person name="Shum M.H."/>
            <person name="Leung G.M."/>
            <person name="Lam T.T."/>
            <person name="Wu J.T."/>
        </authorList>
    </citation>
    <scope>VARIANT 28-HIS--ILE-121 DEL</scope>
    <source>
        <strain>20B/501Y.V1</strain>
        <strain>B.1.1.7</strain>
        <strain>VOC-202012/01</strain>
        <strain>VUI-202012/01</strain>
    </source>
</reference>
<reference key="9">
    <citation type="journal article" date="2021" name="Front. Immunol.">
        <title>SARS-CoV-2 ORF8 Forms Intracellular Aggregates and Inhibits IFNgamma-Induced Antiviral Gene Expression in Human Lung Epithelial Cells.</title>
        <authorList>
            <person name="Geng H."/>
            <person name="Subramanian S."/>
            <person name="Wu L."/>
            <person name="Bu H.F."/>
            <person name="Wang X."/>
            <person name="Du C."/>
            <person name="De Plaen I.G."/>
            <person name="Tan X.D."/>
        </authorList>
    </citation>
    <scope>FUNCTION</scope>
    <scope>SUBCELLULAR LOCATION</scope>
</reference>
<reference key="10">
    <citation type="journal article" date="2021" name="Proc. Natl. Acad. Sci. U.S.A.">
        <title>The ORF8 protein of SARS-CoV-2 mediates immune evasion through down-regulating MHC-Iota.</title>
        <authorList>
            <person name="Zhang Y."/>
            <person name="Chen Y."/>
            <person name="Li Y."/>
            <person name="Huang F."/>
            <person name="Luo B."/>
            <person name="Yuan Y."/>
            <person name="Xia B."/>
            <person name="Ma X."/>
            <person name="Yang T."/>
            <person name="Yu F."/>
            <person name="Liu J."/>
            <person name="Liu B."/>
            <person name="Song Z."/>
            <person name="Chen J."/>
            <person name="Yan S."/>
            <person name="Wu L."/>
            <person name="Pan T."/>
            <person name="Zhang X."/>
            <person name="Li R."/>
            <person name="Huang W."/>
            <person name="He X."/>
            <person name="Xiao F."/>
            <person name="Zhang J."/>
            <person name="Zhang H."/>
        </authorList>
    </citation>
    <scope>FUNCTION</scope>
    <scope>INTERACTION WITH HOST MHC-I</scope>
</reference>
<reference key="11">
    <citation type="journal article" date="2022" name="J. Biol. Chem.">
        <title>SARS-CoV-2 accessory protein ORF8 is secreted extracellularly as a glycoprotein homodimer.</title>
        <authorList>
            <person name="Matsuoka K."/>
            <person name="Imahashi N."/>
            <person name="Ohno M."/>
            <person name="Ode H."/>
            <person name="Nakata Y."/>
            <person name="Kubota M."/>
            <person name="Sugimoto A."/>
            <person name="Imahashi M."/>
            <person name="Yokomaku Y."/>
            <person name="Iwatani Y."/>
        </authorList>
    </citation>
    <scope>FUNCTION</scope>
    <scope>SUBCELLULAR LOCATION</scope>
    <scope>HOMODIMERIZATION</scope>
    <scope>MUTAGENESIS OF CYS-20 AND ASN-78</scope>
    <scope>DISULFIDE BOND</scope>
    <scope>GLYCOSYLATION AT ASN-78</scope>
</reference>
<reference key="12">
    <citation type="journal article" date="2022" name="MBio">
        <title>Viral Mimicry of Interleukin-17A by SARS-CoV-2 ORF8.</title>
        <authorList>
            <person name="Wu X."/>
            <person name="Xia T."/>
            <person name="Shin W.J."/>
            <person name="Yu K.M."/>
            <person name="Jung W."/>
            <person name="Herrmann A."/>
            <person name="Foo S.S."/>
            <person name="Chen W."/>
            <person name="Zhang P."/>
            <person name="Lee J.S."/>
            <person name="Poo H."/>
            <person name="Comhair S.A.A."/>
            <person name="Jehi L."/>
            <person name="Choi Y.K."/>
            <person name="Ensser A."/>
            <person name="Jung J.U."/>
        </authorList>
    </citation>
    <scope>FUNCTION</scope>
    <scope>SUBCELLULAR LOCATION</scope>
    <scope>INTERACTION WITH HUMAN IL17RA</scope>
    <scope>MUTAGENESIS OF SER-24; TYR-42; VAL-62; ILE-71; ILE-76; LEU-84 AND GLU-106</scope>
</reference>
<reference key="13">
    <citation type="journal article" date="2023" name="PLoS Pathog.">
        <title>Unconventional secretion of unglycosylated ORF8 is critical for the cytokine storm during SARS-CoV-2 infection.</title>
        <authorList>
            <person name="Lin X."/>
            <person name="Fu B."/>
            <person name="Xiong Y."/>
            <person name="Xing N."/>
            <person name="Xue W."/>
            <person name="Guo D."/>
            <person name="Zaky M."/>
            <person name="Pavani K."/>
            <person name="Kunec D."/>
            <person name="Trimpert J."/>
            <person name="Wu H."/>
        </authorList>
    </citation>
    <scope>FUNCTION</scope>
    <scope>MUTAGENESIS OF 1-MET--PHE-16 AND ASN-78</scope>
    <scope>SUBCELLULAR LOCATION</scope>
</reference>
<reference key="14">
    <citation type="submission" date="2020-08" db="PDB data bank">
        <title>Crystal Structure of the SARS-CoV-2 ORF8 Protein.</title>
        <authorList>
            <person name="Nelson C.A."/>
            <person name="Hall P.D."/>
            <person name="Fremont D.H."/>
        </authorList>
    </citation>
    <scope>X-RAY CRYSTALLOGRAPHY (1.61 ANGSTROMS) OF 18-121</scope>
    <scope>DISULFIDE BOND</scope>
</reference>
<reference key="15">
    <citation type="journal article" date="2021" name="Proc. Natl. Acad. Sci. U.S.A.">
        <title>Structure of SARS-CoV-2 ORF8, a rapidly evolving immune evasion protein.</title>
        <authorList>
            <person name="Flower T.G."/>
            <person name="Buffalo C.Z."/>
            <person name="Hooy R.M."/>
            <person name="Allaire M."/>
            <person name="Ren X."/>
            <person name="Hurley J.H."/>
        </authorList>
    </citation>
    <scope>X-RAY CRYSTALLOGRAPHY (2.04 ANGSTROMS) OF 18-121</scope>
    <scope>DISULFIDE BOND</scope>
    <scope>HOMODIMERIZATION</scope>
</reference>
<gene>
    <name type="ORF">8</name>
</gene>
<evidence type="ECO:0000255" key="1"/>
<evidence type="ECO:0000255" key="2">
    <source>
        <dbReference type="PROSITE-ProRule" id="PRU01309"/>
    </source>
</evidence>
<evidence type="ECO:0000269" key="3">
    <source>
    </source>
</evidence>
<evidence type="ECO:0000269" key="4">
    <source>
    </source>
</evidence>
<evidence type="ECO:0000269" key="5">
    <source>
    </source>
</evidence>
<evidence type="ECO:0000269" key="6">
    <source>
    </source>
</evidence>
<evidence type="ECO:0000269" key="7">
    <source>
    </source>
</evidence>
<evidence type="ECO:0000269" key="8">
    <source>
    </source>
</evidence>
<evidence type="ECO:0000269" key="9">
    <source>
    </source>
</evidence>
<evidence type="ECO:0000269" key="10">
    <source>
    </source>
</evidence>
<evidence type="ECO:0000269" key="11">
    <source>
    </source>
</evidence>
<evidence type="ECO:0000269" key="12">
    <source ref="14"/>
</evidence>
<evidence type="ECO:0000303" key="13">
    <source>
    </source>
</evidence>
<evidence type="ECO:0000305" key="14"/>
<evidence type="ECO:0000305" key="15">
    <source>
    </source>
</evidence>
<evidence type="ECO:0000305" key="16">
    <source>
    </source>
</evidence>
<evidence type="ECO:0000305" key="17">
    <source>
    </source>
</evidence>
<evidence type="ECO:0007829" key="18">
    <source>
        <dbReference type="PDB" id="7F5F"/>
    </source>
</evidence>
<evidence type="ECO:0007829" key="19">
    <source>
        <dbReference type="PDB" id="7JX6"/>
    </source>
</evidence>